<dbReference type="EC" id="2.7.1.144" evidence="1"/>
<dbReference type="EMBL" id="CP000114">
    <property type="protein sequence ID" value="ABA44756.1"/>
    <property type="molecule type" value="Genomic_DNA"/>
</dbReference>
<dbReference type="RefSeq" id="WP_000604245.1">
    <property type="nucleotide sequence ID" value="NC_007432.1"/>
</dbReference>
<dbReference type="SMR" id="Q3JZ20"/>
<dbReference type="KEGG" id="sak:SAK_1888"/>
<dbReference type="HOGENOM" id="CLU_050013_5_0_9"/>
<dbReference type="UniPathway" id="UPA00704">
    <property type="reaction ID" value="UER00715"/>
</dbReference>
<dbReference type="GO" id="GO:0005829">
    <property type="term" value="C:cytosol"/>
    <property type="evidence" value="ECO:0007669"/>
    <property type="project" value="TreeGrafter"/>
</dbReference>
<dbReference type="GO" id="GO:0005524">
    <property type="term" value="F:ATP binding"/>
    <property type="evidence" value="ECO:0007669"/>
    <property type="project" value="UniProtKB-KW"/>
</dbReference>
<dbReference type="GO" id="GO:0008443">
    <property type="term" value="F:phosphofructokinase activity"/>
    <property type="evidence" value="ECO:0007669"/>
    <property type="project" value="TreeGrafter"/>
</dbReference>
<dbReference type="GO" id="GO:0009024">
    <property type="term" value="F:tagatose-6-phosphate kinase activity"/>
    <property type="evidence" value="ECO:0007669"/>
    <property type="project" value="UniProtKB-UniRule"/>
</dbReference>
<dbReference type="GO" id="GO:2001059">
    <property type="term" value="P:D-tagatose 6-phosphate catabolic process"/>
    <property type="evidence" value="ECO:0007669"/>
    <property type="project" value="UniProtKB-UniRule"/>
</dbReference>
<dbReference type="GO" id="GO:0019512">
    <property type="term" value="P:lactose catabolic process via tagatose-6-phosphate"/>
    <property type="evidence" value="ECO:0007669"/>
    <property type="project" value="InterPro"/>
</dbReference>
<dbReference type="CDD" id="cd01164">
    <property type="entry name" value="FruK_PfkB_like"/>
    <property type="match status" value="1"/>
</dbReference>
<dbReference type="FunFam" id="3.40.1190.20:FF:000001">
    <property type="entry name" value="Phosphofructokinase"/>
    <property type="match status" value="1"/>
</dbReference>
<dbReference type="Gene3D" id="3.40.1190.20">
    <property type="match status" value="1"/>
</dbReference>
<dbReference type="HAMAP" id="MF_01557">
    <property type="entry name" value="LacC"/>
    <property type="match status" value="1"/>
</dbReference>
<dbReference type="InterPro" id="IPR002173">
    <property type="entry name" value="Carboh/pur_kinase_PfkB_CS"/>
</dbReference>
<dbReference type="InterPro" id="IPR005926">
    <property type="entry name" value="LacC"/>
</dbReference>
<dbReference type="InterPro" id="IPR011611">
    <property type="entry name" value="PfkB_dom"/>
</dbReference>
<dbReference type="InterPro" id="IPR029056">
    <property type="entry name" value="Ribokinase-like"/>
</dbReference>
<dbReference type="InterPro" id="IPR017583">
    <property type="entry name" value="Tagatose/fructose_Pkinase"/>
</dbReference>
<dbReference type="NCBIfam" id="TIGR03168">
    <property type="entry name" value="1-PFK"/>
    <property type="match status" value="1"/>
</dbReference>
<dbReference type="NCBIfam" id="TIGR01231">
    <property type="entry name" value="lacC"/>
    <property type="match status" value="1"/>
</dbReference>
<dbReference type="NCBIfam" id="NF010033">
    <property type="entry name" value="PRK13508.1"/>
    <property type="match status" value="1"/>
</dbReference>
<dbReference type="PANTHER" id="PTHR46566:SF5">
    <property type="entry name" value="1-PHOSPHOFRUCTOKINASE"/>
    <property type="match status" value="1"/>
</dbReference>
<dbReference type="PANTHER" id="PTHR46566">
    <property type="entry name" value="1-PHOSPHOFRUCTOKINASE-RELATED"/>
    <property type="match status" value="1"/>
</dbReference>
<dbReference type="Pfam" id="PF00294">
    <property type="entry name" value="PfkB"/>
    <property type="match status" value="1"/>
</dbReference>
<dbReference type="PIRSF" id="PIRSF000535">
    <property type="entry name" value="1PFK/6PFK/LacC"/>
    <property type="match status" value="1"/>
</dbReference>
<dbReference type="SUPFAM" id="SSF53613">
    <property type="entry name" value="Ribokinase-like"/>
    <property type="match status" value="1"/>
</dbReference>
<dbReference type="PROSITE" id="PS00583">
    <property type="entry name" value="PFKB_KINASES_1"/>
    <property type="match status" value="1"/>
</dbReference>
<dbReference type="PROSITE" id="PS00584">
    <property type="entry name" value="PFKB_KINASES_2"/>
    <property type="match status" value="1"/>
</dbReference>
<comment type="catalytic activity">
    <reaction evidence="1">
        <text>D-tagatofuranose 6-phosphate + ATP = D-tagatofuranose 1,6-bisphosphate + ADP + H(+)</text>
        <dbReference type="Rhea" id="RHEA:12420"/>
        <dbReference type="ChEBI" id="CHEBI:15378"/>
        <dbReference type="ChEBI" id="CHEBI:30616"/>
        <dbReference type="ChEBI" id="CHEBI:58694"/>
        <dbReference type="ChEBI" id="CHEBI:58695"/>
        <dbReference type="ChEBI" id="CHEBI:456216"/>
        <dbReference type="EC" id="2.7.1.144"/>
    </reaction>
</comment>
<comment type="pathway">
    <text evidence="1">Carbohydrate metabolism; D-tagatose 6-phosphate degradation; D-glyceraldehyde 3-phosphate and glycerone phosphate from D-tagatose 6-phosphate: step 1/2.</text>
</comment>
<comment type="similarity">
    <text evidence="1">Belongs to the carbohydrate kinase PfkB family. LacC subfamily.</text>
</comment>
<name>LACC_STRA1</name>
<gene>
    <name evidence="1" type="primary">lacC</name>
    <name type="ordered locus">SAK_1888</name>
</gene>
<protein>
    <recommendedName>
        <fullName evidence="1">Tagatose-6-phosphate kinase</fullName>
        <ecNumber evidence="1">2.7.1.144</ecNumber>
    </recommendedName>
    <alternativeName>
        <fullName evidence="1">Phosphotagatokinase</fullName>
    </alternativeName>
</protein>
<evidence type="ECO:0000255" key="1">
    <source>
        <dbReference type="HAMAP-Rule" id="MF_01557"/>
    </source>
</evidence>
<sequence>MILTVTLNPSIDISYCLENFNMDTVNRVTDVSKTPGGKGLNVTRVLSQLGDNVVATGLLGGYFGDFIRSGLDALEIRHQFLSIGGETRHCIAVLHEGQQTEILEKGPHITKDEADAFLNHLKLIFDAATIITVSGSLPKGLPSDYYARLISLANHFNKKVVLDCSGEALRSVLKSSAKPTVIKPNLEELTQLIGKPISYSLDELKSTLQQDIFRGIDWVIVSLGAKGAFAKHGNHYYQVTIPKIEVINPVGSGDATVAGIASALEHQLDDTNLLKRANVLGMLNAQETLTGHINLTYYQELISQIQVKEV</sequence>
<proteinExistence type="inferred from homology"/>
<keyword id="KW-0067">ATP-binding</keyword>
<keyword id="KW-0418">Kinase</keyword>
<keyword id="KW-0423">Lactose metabolism</keyword>
<keyword id="KW-0547">Nucleotide-binding</keyword>
<keyword id="KW-0808">Transferase</keyword>
<organism>
    <name type="scientific">Streptococcus agalactiae serotype Ia (strain ATCC 27591 / A909 / CDC SS700)</name>
    <dbReference type="NCBI Taxonomy" id="205921"/>
    <lineage>
        <taxon>Bacteria</taxon>
        <taxon>Bacillati</taxon>
        <taxon>Bacillota</taxon>
        <taxon>Bacilli</taxon>
        <taxon>Lactobacillales</taxon>
        <taxon>Streptococcaceae</taxon>
        <taxon>Streptococcus</taxon>
    </lineage>
</organism>
<reference key="1">
    <citation type="journal article" date="2005" name="Proc. Natl. Acad. Sci. U.S.A.">
        <title>Genome analysis of multiple pathogenic isolates of Streptococcus agalactiae: implications for the microbial 'pan-genome'.</title>
        <authorList>
            <person name="Tettelin H."/>
            <person name="Masignani V."/>
            <person name="Cieslewicz M.J."/>
            <person name="Donati C."/>
            <person name="Medini D."/>
            <person name="Ward N.L."/>
            <person name="Angiuoli S.V."/>
            <person name="Crabtree J."/>
            <person name="Jones A.L."/>
            <person name="Durkin A.S."/>
            <person name="DeBoy R.T."/>
            <person name="Davidsen T.M."/>
            <person name="Mora M."/>
            <person name="Scarselli M."/>
            <person name="Margarit y Ros I."/>
            <person name="Peterson J.D."/>
            <person name="Hauser C.R."/>
            <person name="Sundaram J.P."/>
            <person name="Nelson W.C."/>
            <person name="Madupu R."/>
            <person name="Brinkac L.M."/>
            <person name="Dodson R.J."/>
            <person name="Rosovitz M.J."/>
            <person name="Sullivan S.A."/>
            <person name="Daugherty S.C."/>
            <person name="Haft D.H."/>
            <person name="Selengut J."/>
            <person name="Gwinn M.L."/>
            <person name="Zhou L."/>
            <person name="Zafar N."/>
            <person name="Khouri H."/>
            <person name="Radune D."/>
            <person name="Dimitrov G."/>
            <person name="Watkins K."/>
            <person name="O'Connor K.J."/>
            <person name="Smith S."/>
            <person name="Utterback T.R."/>
            <person name="White O."/>
            <person name="Rubens C.E."/>
            <person name="Grandi G."/>
            <person name="Madoff L.C."/>
            <person name="Kasper D.L."/>
            <person name="Telford J.L."/>
            <person name="Wessels M.R."/>
            <person name="Rappuoli R."/>
            <person name="Fraser C.M."/>
        </authorList>
    </citation>
    <scope>NUCLEOTIDE SEQUENCE [LARGE SCALE GENOMIC DNA]</scope>
    <source>
        <strain>ATCC 27591 / A909 / CDC SS700</strain>
    </source>
</reference>
<accession>Q3JZ20</accession>
<feature type="chain" id="PRO_0000203926" description="Tagatose-6-phosphate kinase">
    <location>
        <begin position="1"/>
        <end position="310"/>
    </location>
</feature>